<proteinExistence type="inferred from homology"/>
<name>RS10_KLEP3</name>
<sequence>MQNQRIRIRLKAFDHRLIDQSTAEIVETAKRTGAQVRGPIPLPTRKERFTVLISPHVNKDARDQYEIRTHKRLVDIVEPTEKTVDALMRLDLAAGVDVQISLG</sequence>
<reference key="1">
    <citation type="journal article" date="2008" name="PLoS Genet.">
        <title>Complete genome sequence of the N2-fixing broad host range endophyte Klebsiella pneumoniae 342 and virulence predictions verified in mice.</title>
        <authorList>
            <person name="Fouts D.E."/>
            <person name="Tyler H.L."/>
            <person name="DeBoy R.T."/>
            <person name="Daugherty S."/>
            <person name="Ren Q."/>
            <person name="Badger J.H."/>
            <person name="Durkin A.S."/>
            <person name="Huot H."/>
            <person name="Shrivastava S."/>
            <person name="Kothari S."/>
            <person name="Dodson R.J."/>
            <person name="Mohamoud Y."/>
            <person name="Khouri H."/>
            <person name="Roesch L.F.W."/>
            <person name="Krogfelt K.A."/>
            <person name="Struve C."/>
            <person name="Triplett E.W."/>
            <person name="Methe B.A."/>
        </authorList>
    </citation>
    <scope>NUCLEOTIDE SEQUENCE [LARGE SCALE GENOMIC DNA]</scope>
    <source>
        <strain>342</strain>
    </source>
</reference>
<gene>
    <name evidence="1" type="primary">rpsJ</name>
    <name type="ordered locus">KPK_0398</name>
</gene>
<organism>
    <name type="scientific">Klebsiella pneumoniae (strain 342)</name>
    <dbReference type="NCBI Taxonomy" id="507522"/>
    <lineage>
        <taxon>Bacteria</taxon>
        <taxon>Pseudomonadati</taxon>
        <taxon>Pseudomonadota</taxon>
        <taxon>Gammaproteobacteria</taxon>
        <taxon>Enterobacterales</taxon>
        <taxon>Enterobacteriaceae</taxon>
        <taxon>Klebsiella/Raoultella group</taxon>
        <taxon>Klebsiella</taxon>
        <taxon>Klebsiella pneumoniae complex</taxon>
    </lineage>
</organism>
<feature type="chain" id="PRO_1000127138" description="Small ribosomal subunit protein uS10">
    <location>
        <begin position="1"/>
        <end position="103"/>
    </location>
</feature>
<protein>
    <recommendedName>
        <fullName evidence="1">Small ribosomal subunit protein uS10</fullName>
    </recommendedName>
    <alternativeName>
        <fullName evidence="2">30S ribosomal protein S10</fullName>
    </alternativeName>
</protein>
<evidence type="ECO:0000255" key="1">
    <source>
        <dbReference type="HAMAP-Rule" id="MF_00508"/>
    </source>
</evidence>
<evidence type="ECO:0000305" key="2"/>
<comment type="function">
    <text evidence="1">Involved in the binding of tRNA to the ribosomes.</text>
</comment>
<comment type="subunit">
    <text evidence="1">Part of the 30S ribosomal subunit.</text>
</comment>
<comment type="similarity">
    <text evidence="1">Belongs to the universal ribosomal protein uS10 family.</text>
</comment>
<keyword id="KW-0687">Ribonucleoprotein</keyword>
<keyword id="KW-0689">Ribosomal protein</keyword>
<dbReference type="EMBL" id="CP000964">
    <property type="protein sequence ID" value="ACI06646.1"/>
    <property type="molecule type" value="Genomic_DNA"/>
</dbReference>
<dbReference type="SMR" id="B5XN93"/>
<dbReference type="KEGG" id="kpe:KPK_0398"/>
<dbReference type="HOGENOM" id="CLU_122625_1_3_6"/>
<dbReference type="Proteomes" id="UP000001734">
    <property type="component" value="Chromosome"/>
</dbReference>
<dbReference type="GO" id="GO:1990904">
    <property type="term" value="C:ribonucleoprotein complex"/>
    <property type="evidence" value="ECO:0007669"/>
    <property type="project" value="UniProtKB-KW"/>
</dbReference>
<dbReference type="GO" id="GO:0005840">
    <property type="term" value="C:ribosome"/>
    <property type="evidence" value="ECO:0007669"/>
    <property type="project" value="UniProtKB-KW"/>
</dbReference>
<dbReference type="GO" id="GO:0003735">
    <property type="term" value="F:structural constituent of ribosome"/>
    <property type="evidence" value="ECO:0007669"/>
    <property type="project" value="InterPro"/>
</dbReference>
<dbReference type="GO" id="GO:0000049">
    <property type="term" value="F:tRNA binding"/>
    <property type="evidence" value="ECO:0007669"/>
    <property type="project" value="UniProtKB-UniRule"/>
</dbReference>
<dbReference type="GO" id="GO:0006412">
    <property type="term" value="P:translation"/>
    <property type="evidence" value="ECO:0007669"/>
    <property type="project" value="UniProtKB-UniRule"/>
</dbReference>
<dbReference type="FunFam" id="3.30.70.600:FF:000001">
    <property type="entry name" value="30S ribosomal protein S10"/>
    <property type="match status" value="1"/>
</dbReference>
<dbReference type="Gene3D" id="3.30.70.600">
    <property type="entry name" value="Ribosomal protein S10 domain"/>
    <property type="match status" value="1"/>
</dbReference>
<dbReference type="HAMAP" id="MF_00508">
    <property type="entry name" value="Ribosomal_uS10"/>
    <property type="match status" value="1"/>
</dbReference>
<dbReference type="InterPro" id="IPR001848">
    <property type="entry name" value="Ribosomal_uS10"/>
</dbReference>
<dbReference type="InterPro" id="IPR018268">
    <property type="entry name" value="Ribosomal_uS10_CS"/>
</dbReference>
<dbReference type="InterPro" id="IPR027486">
    <property type="entry name" value="Ribosomal_uS10_dom"/>
</dbReference>
<dbReference type="InterPro" id="IPR036838">
    <property type="entry name" value="Ribosomal_uS10_dom_sf"/>
</dbReference>
<dbReference type="NCBIfam" id="NF001861">
    <property type="entry name" value="PRK00596.1"/>
    <property type="match status" value="1"/>
</dbReference>
<dbReference type="NCBIfam" id="TIGR01049">
    <property type="entry name" value="rpsJ_bact"/>
    <property type="match status" value="1"/>
</dbReference>
<dbReference type="PANTHER" id="PTHR11700">
    <property type="entry name" value="30S RIBOSOMAL PROTEIN S10 FAMILY MEMBER"/>
    <property type="match status" value="1"/>
</dbReference>
<dbReference type="Pfam" id="PF00338">
    <property type="entry name" value="Ribosomal_S10"/>
    <property type="match status" value="1"/>
</dbReference>
<dbReference type="PRINTS" id="PR00971">
    <property type="entry name" value="RIBOSOMALS10"/>
</dbReference>
<dbReference type="SMART" id="SM01403">
    <property type="entry name" value="Ribosomal_S10"/>
    <property type="match status" value="1"/>
</dbReference>
<dbReference type="SUPFAM" id="SSF54999">
    <property type="entry name" value="Ribosomal protein S10"/>
    <property type="match status" value="1"/>
</dbReference>
<dbReference type="PROSITE" id="PS00361">
    <property type="entry name" value="RIBOSOMAL_S10"/>
    <property type="match status" value="1"/>
</dbReference>
<accession>B5XN93</accession>